<keyword id="KW-0433">Leucine-rich repeat</keyword>
<keyword id="KW-1185">Reference proteome</keyword>
<keyword id="KW-0677">Repeat</keyword>
<keyword id="KW-0853">WD repeat</keyword>
<name>NWD2_MOUSE</name>
<feature type="chain" id="PRO_0000320921" description="NACHT and WD repeat domain-containing protein 2">
    <location>
        <begin position="1"/>
        <end position="1742"/>
    </location>
</feature>
<feature type="repeat" description="LRR 1">
    <location>
        <begin position="386"/>
        <end position="410"/>
    </location>
</feature>
<feature type="domain" description="NACHT">
    <location>
        <begin position="410"/>
        <end position="737"/>
    </location>
</feature>
<feature type="repeat" description="LRR 2">
    <location>
        <begin position="677"/>
        <end position="698"/>
    </location>
</feature>
<feature type="repeat" description="LRR 3">
    <location>
        <begin position="724"/>
        <end position="747"/>
    </location>
</feature>
<feature type="repeat" description="LRR 4">
    <location>
        <begin position="883"/>
        <end position="906"/>
    </location>
</feature>
<feature type="repeat" description="LRR 5">
    <location>
        <begin position="925"/>
        <end position="953"/>
    </location>
</feature>
<feature type="repeat" description="WD 1">
    <location>
        <begin position="963"/>
        <end position="1004"/>
    </location>
</feature>
<feature type="repeat" description="WD 2">
    <location>
        <begin position="1007"/>
        <end position="1046"/>
    </location>
</feature>
<feature type="repeat" description="WD 3">
    <location>
        <begin position="1140"/>
        <end position="1179"/>
    </location>
</feature>
<feature type="repeat" description="WD 4">
    <location>
        <begin position="1229"/>
        <end position="1271"/>
    </location>
</feature>
<feature type="repeat" description="WD 5">
    <location>
        <begin position="1272"/>
        <end position="1311"/>
    </location>
</feature>
<feature type="repeat" description="WD 6">
    <location>
        <begin position="1314"/>
        <end position="1353"/>
    </location>
</feature>
<feature type="repeat" description="WD 7">
    <location>
        <begin position="1355"/>
        <end position="1394"/>
    </location>
</feature>
<feature type="repeat" description="WD 8">
    <location>
        <begin position="1396"/>
        <end position="1434"/>
    </location>
</feature>
<feature type="repeat" description="WD 9">
    <location>
        <begin position="1476"/>
        <end position="1516"/>
    </location>
</feature>
<feature type="repeat" description="WD 10">
    <location>
        <begin position="1522"/>
        <end position="1561"/>
    </location>
</feature>
<feature type="repeat" description="WD 11">
    <location>
        <begin position="1614"/>
        <end position="1653"/>
    </location>
</feature>
<feature type="region of interest" description="Disordered" evidence="1">
    <location>
        <begin position="1702"/>
        <end position="1721"/>
    </location>
</feature>
<feature type="compositionally biased region" description="Polar residues" evidence="1">
    <location>
        <begin position="1703"/>
        <end position="1715"/>
    </location>
</feature>
<feature type="sequence conflict" description="In Ref. 3; BAC41474." evidence="2" ref="3">
    <original>G</original>
    <variation>S</variation>
    <location>
        <position position="1218"/>
    </location>
</feature>
<gene>
    <name type="primary">Nwd2</name>
    <name type="synonym">Kiaa1239</name>
</gene>
<dbReference type="EMBL" id="AC114408">
    <property type="status" value="NOT_ANNOTATED_CDS"/>
    <property type="molecule type" value="Genomic_DNA"/>
</dbReference>
<dbReference type="EMBL" id="AC122744">
    <property type="status" value="NOT_ANNOTATED_CDS"/>
    <property type="molecule type" value="Genomic_DNA"/>
</dbReference>
<dbReference type="EMBL" id="BC062655">
    <property type="protein sequence ID" value="AAH62655.1"/>
    <property type="molecule type" value="mRNA"/>
</dbReference>
<dbReference type="EMBL" id="AB093290">
    <property type="protein sequence ID" value="BAC41474.1"/>
    <property type="status" value="ALT_INIT"/>
    <property type="molecule type" value="mRNA"/>
</dbReference>
<dbReference type="EMBL" id="AK136869">
    <property type="protein sequence ID" value="BAE23152.1"/>
    <property type="molecule type" value="mRNA"/>
</dbReference>
<dbReference type="CCDS" id="CCDS51508.1"/>
<dbReference type="RefSeq" id="NP_795980.2">
    <property type="nucleotide sequence ID" value="NM_177006.3"/>
</dbReference>
<dbReference type="BioGRID" id="235540">
    <property type="interactions" value="4"/>
</dbReference>
<dbReference type="FunCoup" id="Q6P5U7">
    <property type="interactions" value="143"/>
</dbReference>
<dbReference type="IntAct" id="Q6P5U7">
    <property type="interactions" value="3"/>
</dbReference>
<dbReference type="MINT" id="Q6P5U7"/>
<dbReference type="STRING" id="10090.ENSMUSP00000124712"/>
<dbReference type="GlyGen" id="Q6P5U7">
    <property type="glycosylation" value="3 sites, 2 N-linked glycans (2 sites)"/>
</dbReference>
<dbReference type="iPTMnet" id="Q6P5U7"/>
<dbReference type="PhosphoSitePlus" id="Q6P5U7"/>
<dbReference type="PaxDb" id="10090-ENSMUSP00000124712"/>
<dbReference type="PeptideAtlas" id="Q6P5U7"/>
<dbReference type="ProteomicsDB" id="293909"/>
<dbReference type="Antibodypedia" id="71143">
    <property type="antibodies" value="3 antibodies from 3 providers"/>
</dbReference>
<dbReference type="Ensembl" id="ENSMUST00000159584.3">
    <property type="protein sequence ID" value="ENSMUSP00000124712.2"/>
    <property type="gene ID" value="ENSMUSG00000090061.10"/>
</dbReference>
<dbReference type="GeneID" id="319807"/>
<dbReference type="KEGG" id="mmu:319807"/>
<dbReference type="UCSC" id="uc008xmf.2">
    <property type="organism name" value="mouse"/>
</dbReference>
<dbReference type="AGR" id="MGI:1920464"/>
<dbReference type="CTD" id="57495"/>
<dbReference type="MGI" id="MGI:1920464">
    <property type="gene designation" value="Nwd2"/>
</dbReference>
<dbReference type="VEuPathDB" id="HostDB:ENSMUSG00000090061"/>
<dbReference type="eggNOG" id="KOG3602">
    <property type="taxonomic scope" value="Eukaryota"/>
</dbReference>
<dbReference type="GeneTree" id="ENSGT00940000153648"/>
<dbReference type="HOGENOM" id="CLU_003267_0_0_1"/>
<dbReference type="InParanoid" id="Q6P5U7"/>
<dbReference type="OMA" id="KHCGIGG"/>
<dbReference type="OrthoDB" id="2325716at2759"/>
<dbReference type="PhylomeDB" id="Q6P5U7"/>
<dbReference type="TreeFam" id="TF332647"/>
<dbReference type="BioGRID-ORCS" id="319807">
    <property type="hits" value="1 hit in 75 CRISPR screens"/>
</dbReference>
<dbReference type="ChiTaRS" id="Nwd2">
    <property type="organism name" value="mouse"/>
</dbReference>
<dbReference type="PRO" id="PR:Q6P5U7"/>
<dbReference type="Proteomes" id="UP000000589">
    <property type="component" value="Chromosome 5"/>
</dbReference>
<dbReference type="RNAct" id="Q6P5U7">
    <property type="molecule type" value="protein"/>
</dbReference>
<dbReference type="Bgee" id="ENSMUSG00000090061">
    <property type="expression patterns" value="Expressed in habenula and 77 other cell types or tissues"/>
</dbReference>
<dbReference type="ExpressionAtlas" id="Q6P5U7">
    <property type="expression patterns" value="baseline and differential"/>
</dbReference>
<dbReference type="GO" id="GO:0045202">
    <property type="term" value="C:synapse"/>
    <property type="evidence" value="ECO:0000314"/>
    <property type="project" value="SynGO"/>
</dbReference>
<dbReference type="FunFam" id="2.130.10.10:FF:001157">
    <property type="entry name" value="Leucine-rich repeat and WD repeat-containing protein KIAA1239"/>
    <property type="match status" value="1"/>
</dbReference>
<dbReference type="FunFam" id="2.130.10.10:FF:000299">
    <property type="entry name" value="NACHT and WD repeat domain containing 2"/>
    <property type="match status" value="1"/>
</dbReference>
<dbReference type="FunFam" id="2.130.10.10:FF:000727">
    <property type="entry name" value="NACHT and WD repeat domain containing 2"/>
    <property type="match status" value="1"/>
</dbReference>
<dbReference type="FunFam" id="3.40.50.300:FF:000926">
    <property type="entry name" value="NACHT and WD repeat domain containing 2"/>
    <property type="match status" value="1"/>
</dbReference>
<dbReference type="Gene3D" id="3.40.50.300">
    <property type="entry name" value="P-loop containing nucleotide triphosphate hydrolases"/>
    <property type="match status" value="1"/>
</dbReference>
<dbReference type="Gene3D" id="2.130.10.10">
    <property type="entry name" value="YVTN repeat-like/Quinoprotein amine dehydrogenase"/>
    <property type="match status" value="3"/>
</dbReference>
<dbReference type="InterPro" id="IPR041664">
    <property type="entry name" value="AAA_16"/>
</dbReference>
<dbReference type="InterPro" id="IPR056534">
    <property type="entry name" value="Beta-prop_NWD2_C"/>
</dbReference>
<dbReference type="InterPro" id="IPR052752">
    <property type="entry name" value="NACHT-WD_repeat"/>
</dbReference>
<dbReference type="InterPro" id="IPR027417">
    <property type="entry name" value="P-loop_NTPase"/>
</dbReference>
<dbReference type="InterPro" id="IPR011047">
    <property type="entry name" value="Quinoprotein_ADH-like_sf"/>
</dbReference>
<dbReference type="InterPro" id="IPR015943">
    <property type="entry name" value="WD40/YVTN_repeat-like_dom_sf"/>
</dbReference>
<dbReference type="InterPro" id="IPR036322">
    <property type="entry name" value="WD40_repeat_dom_sf"/>
</dbReference>
<dbReference type="InterPro" id="IPR001680">
    <property type="entry name" value="WD40_rpt"/>
</dbReference>
<dbReference type="PANTHER" id="PTHR19871">
    <property type="entry name" value="BETA TRANSDUCIN-RELATED PROTEIN"/>
    <property type="match status" value="1"/>
</dbReference>
<dbReference type="PANTHER" id="PTHR19871:SF39">
    <property type="entry name" value="NACHT AND WD REPEAT DOMAIN-CONTAINING PROTEIN 2"/>
    <property type="match status" value="1"/>
</dbReference>
<dbReference type="Pfam" id="PF13191">
    <property type="entry name" value="AAA_16"/>
    <property type="match status" value="1"/>
</dbReference>
<dbReference type="Pfam" id="PF23586">
    <property type="entry name" value="Beta-prop_NWD2_C"/>
    <property type="match status" value="1"/>
</dbReference>
<dbReference type="Pfam" id="PF25469">
    <property type="entry name" value="HTH_NWD1"/>
    <property type="match status" value="1"/>
</dbReference>
<dbReference type="SMART" id="SM00320">
    <property type="entry name" value="WD40"/>
    <property type="match status" value="5"/>
</dbReference>
<dbReference type="SUPFAM" id="SSF52540">
    <property type="entry name" value="P-loop containing nucleoside triphosphate hydrolases"/>
    <property type="match status" value="1"/>
</dbReference>
<dbReference type="SUPFAM" id="SSF50998">
    <property type="entry name" value="Quinoprotein alcohol dehydrogenase-like"/>
    <property type="match status" value="1"/>
</dbReference>
<dbReference type="SUPFAM" id="SSF50978">
    <property type="entry name" value="WD40 repeat-like"/>
    <property type="match status" value="2"/>
</dbReference>
<dbReference type="PROSITE" id="PS00678">
    <property type="entry name" value="WD_REPEATS_1"/>
    <property type="match status" value="1"/>
</dbReference>
<dbReference type="PROSITE" id="PS50294">
    <property type="entry name" value="WD_REPEATS_REGION"/>
    <property type="match status" value="2"/>
</dbReference>
<proteinExistence type="evidence at protein level"/>
<accession>Q6P5U7</accession>
<accession>Q3UVW7</accession>
<accession>Q8CHA7</accession>
<evidence type="ECO:0000256" key="1">
    <source>
        <dbReference type="SAM" id="MobiDB-lite"/>
    </source>
</evidence>
<evidence type="ECO:0000305" key="2"/>
<reference key="1">
    <citation type="journal article" date="2009" name="PLoS Biol.">
        <title>Lineage-specific biology revealed by a finished genome assembly of the mouse.</title>
        <authorList>
            <person name="Church D.M."/>
            <person name="Goodstadt L."/>
            <person name="Hillier L.W."/>
            <person name="Zody M.C."/>
            <person name="Goldstein S."/>
            <person name="She X."/>
            <person name="Bult C.J."/>
            <person name="Agarwala R."/>
            <person name="Cherry J.L."/>
            <person name="DiCuccio M."/>
            <person name="Hlavina W."/>
            <person name="Kapustin Y."/>
            <person name="Meric P."/>
            <person name="Maglott D."/>
            <person name="Birtle Z."/>
            <person name="Marques A.C."/>
            <person name="Graves T."/>
            <person name="Zhou S."/>
            <person name="Teague B."/>
            <person name="Potamousis K."/>
            <person name="Churas C."/>
            <person name="Place M."/>
            <person name="Herschleb J."/>
            <person name="Runnheim R."/>
            <person name="Forrest D."/>
            <person name="Amos-Landgraf J."/>
            <person name="Schwartz D.C."/>
            <person name="Cheng Z."/>
            <person name="Lindblad-Toh K."/>
            <person name="Eichler E.E."/>
            <person name="Ponting C.P."/>
        </authorList>
    </citation>
    <scope>NUCLEOTIDE SEQUENCE [LARGE SCALE GENOMIC DNA]</scope>
    <source>
        <strain>C57BL/6J</strain>
    </source>
</reference>
<reference key="2">
    <citation type="journal article" date="2004" name="Genome Res.">
        <title>The status, quality, and expansion of the NIH full-length cDNA project: the Mammalian Gene Collection (MGC).</title>
        <authorList>
            <consortium name="The MGC Project Team"/>
        </authorList>
    </citation>
    <scope>NUCLEOTIDE SEQUENCE [LARGE SCALE MRNA] OF 482-1742</scope>
    <source>
        <strain>C57BL/6J</strain>
        <tissue>Brain</tissue>
    </source>
</reference>
<reference key="3">
    <citation type="journal article" date="2002" name="DNA Res.">
        <title>Prediction of the coding sequences of mouse homologues of KIAA gene: I. The complete nucleotide sequences of 100 mouse KIAA-homologous cDNAs identified by screening of terminal sequences of cDNA clones randomly sampled from size-fractionated libraries.</title>
        <authorList>
            <person name="Okazaki N."/>
            <person name="Kikuno R."/>
            <person name="Ohara R."/>
            <person name="Inamoto S."/>
            <person name="Hara Y."/>
            <person name="Nagase T."/>
            <person name="Ohara O."/>
            <person name="Koga H."/>
        </authorList>
    </citation>
    <scope>NUCLEOTIDE SEQUENCE [LARGE SCALE MRNA] OF 541-1742</scope>
</reference>
<reference key="4">
    <citation type="journal article" date="2005" name="Science">
        <title>The transcriptional landscape of the mammalian genome.</title>
        <authorList>
            <person name="Carninci P."/>
            <person name="Kasukawa T."/>
            <person name="Katayama S."/>
            <person name="Gough J."/>
            <person name="Frith M.C."/>
            <person name="Maeda N."/>
            <person name="Oyama R."/>
            <person name="Ravasi T."/>
            <person name="Lenhard B."/>
            <person name="Wells C."/>
            <person name="Kodzius R."/>
            <person name="Shimokawa K."/>
            <person name="Bajic V.B."/>
            <person name="Brenner S.E."/>
            <person name="Batalov S."/>
            <person name="Forrest A.R."/>
            <person name="Zavolan M."/>
            <person name="Davis M.J."/>
            <person name="Wilming L.G."/>
            <person name="Aidinis V."/>
            <person name="Allen J.E."/>
            <person name="Ambesi-Impiombato A."/>
            <person name="Apweiler R."/>
            <person name="Aturaliya R.N."/>
            <person name="Bailey T.L."/>
            <person name="Bansal M."/>
            <person name="Baxter L."/>
            <person name="Beisel K.W."/>
            <person name="Bersano T."/>
            <person name="Bono H."/>
            <person name="Chalk A.M."/>
            <person name="Chiu K.P."/>
            <person name="Choudhary V."/>
            <person name="Christoffels A."/>
            <person name="Clutterbuck D.R."/>
            <person name="Crowe M.L."/>
            <person name="Dalla E."/>
            <person name="Dalrymple B.P."/>
            <person name="de Bono B."/>
            <person name="Della Gatta G."/>
            <person name="di Bernardo D."/>
            <person name="Down T."/>
            <person name="Engstrom P."/>
            <person name="Fagiolini M."/>
            <person name="Faulkner G."/>
            <person name="Fletcher C.F."/>
            <person name="Fukushima T."/>
            <person name="Furuno M."/>
            <person name="Futaki S."/>
            <person name="Gariboldi M."/>
            <person name="Georgii-Hemming P."/>
            <person name="Gingeras T.R."/>
            <person name="Gojobori T."/>
            <person name="Green R.E."/>
            <person name="Gustincich S."/>
            <person name="Harbers M."/>
            <person name="Hayashi Y."/>
            <person name="Hensch T.K."/>
            <person name="Hirokawa N."/>
            <person name="Hill D."/>
            <person name="Huminiecki L."/>
            <person name="Iacono M."/>
            <person name="Ikeo K."/>
            <person name="Iwama A."/>
            <person name="Ishikawa T."/>
            <person name="Jakt M."/>
            <person name="Kanapin A."/>
            <person name="Katoh M."/>
            <person name="Kawasawa Y."/>
            <person name="Kelso J."/>
            <person name="Kitamura H."/>
            <person name="Kitano H."/>
            <person name="Kollias G."/>
            <person name="Krishnan S.P."/>
            <person name="Kruger A."/>
            <person name="Kummerfeld S.K."/>
            <person name="Kurochkin I.V."/>
            <person name="Lareau L.F."/>
            <person name="Lazarevic D."/>
            <person name="Lipovich L."/>
            <person name="Liu J."/>
            <person name="Liuni S."/>
            <person name="McWilliam S."/>
            <person name="Madan Babu M."/>
            <person name="Madera M."/>
            <person name="Marchionni L."/>
            <person name="Matsuda H."/>
            <person name="Matsuzawa S."/>
            <person name="Miki H."/>
            <person name="Mignone F."/>
            <person name="Miyake S."/>
            <person name="Morris K."/>
            <person name="Mottagui-Tabar S."/>
            <person name="Mulder N."/>
            <person name="Nakano N."/>
            <person name="Nakauchi H."/>
            <person name="Ng P."/>
            <person name="Nilsson R."/>
            <person name="Nishiguchi S."/>
            <person name="Nishikawa S."/>
            <person name="Nori F."/>
            <person name="Ohara O."/>
            <person name="Okazaki Y."/>
            <person name="Orlando V."/>
            <person name="Pang K.C."/>
            <person name="Pavan W.J."/>
            <person name="Pavesi G."/>
            <person name="Pesole G."/>
            <person name="Petrovsky N."/>
            <person name="Piazza S."/>
            <person name="Reed J."/>
            <person name="Reid J.F."/>
            <person name="Ring B.Z."/>
            <person name="Ringwald M."/>
            <person name="Rost B."/>
            <person name="Ruan Y."/>
            <person name="Salzberg S.L."/>
            <person name="Sandelin A."/>
            <person name="Schneider C."/>
            <person name="Schoenbach C."/>
            <person name="Sekiguchi K."/>
            <person name="Semple C.A."/>
            <person name="Seno S."/>
            <person name="Sessa L."/>
            <person name="Sheng Y."/>
            <person name="Shibata Y."/>
            <person name="Shimada H."/>
            <person name="Shimada K."/>
            <person name="Silva D."/>
            <person name="Sinclair B."/>
            <person name="Sperling S."/>
            <person name="Stupka E."/>
            <person name="Sugiura K."/>
            <person name="Sultana R."/>
            <person name="Takenaka Y."/>
            <person name="Taki K."/>
            <person name="Tammoja K."/>
            <person name="Tan S.L."/>
            <person name="Tang S."/>
            <person name="Taylor M.S."/>
            <person name="Tegner J."/>
            <person name="Teichmann S.A."/>
            <person name="Ueda H.R."/>
            <person name="van Nimwegen E."/>
            <person name="Verardo R."/>
            <person name="Wei C.L."/>
            <person name="Yagi K."/>
            <person name="Yamanishi H."/>
            <person name="Zabarovsky E."/>
            <person name="Zhu S."/>
            <person name="Zimmer A."/>
            <person name="Hide W."/>
            <person name="Bult C."/>
            <person name="Grimmond S.M."/>
            <person name="Teasdale R.D."/>
            <person name="Liu E.T."/>
            <person name="Brusic V."/>
            <person name="Quackenbush J."/>
            <person name="Wahlestedt C."/>
            <person name="Mattick J.S."/>
            <person name="Hume D.A."/>
            <person name="Kai C."/>
            <person name="Sasaki D."/>
            <person name="Tomaru Y."/>
            <person name="Fukuda S."/>
            <person name="Kanamori-Katayama M."/>
            <person name="Suzuki M."/>
            <person name="Aoki J."/>
            <person name="Arakawa T."/>
            <person name="Iida J."/>
            <person name="Imamura K."/>
            <person name="Itoh M."/>
            <person name="Kato T."/>
            <person name="Kawaji H."/>
            <person name="Kawagashira N."/>
            <person name="Kawashima T."/>
            <person name="Kojima M."/>
            <person name="Kondo S."/>
            <person name="Konno H."/>
            <person name="Nakano K."/>
            <person name="Ninomiya N."/>
            <person name="Nishio T."/>
            <person name="Okada M."/>
            <person name="Plessy C."/>
            <person name="Shibata K."/>
            <person name="Shiraki T."/>
            <person name="Suzuki S."/>
            <person name="Tagami M."/>
            <person name="Waki K."/>
            <person name="Watahiki A."/>
            <person name="Okamura-Oho Y."/>
            <person name="Suzuki H."/>
            <person name="Kawai J."/>
            <person name="Hayashizaki Y."/>
        </authorList>
    </citation>
    <scope>NUCLEOTIDE SEQUENCE [LARGE SCALE MRNA] OF 1046-1742</scope>
    <source>
        <strain>C57BL/6J</strain>
        <tissue>Diencephalon</tissue>
    </source>
</reference>
<reference key="5">
    <citation type="journal article" date="2006" name="Mol. Cell. Proteomics">
        <title>Comprehensive identification of phosphorylation sites in postsynaptic density preparations.</title>
        <authorList>
            <person name="Trinidad J.C."/>
            <person name="Specht C.G."/>
            <person name="Thalhammer A."/>
            <person name="Schoepfer R."/>
            <person name="Burlingame A.L."/>
        </authorList>
    </citation>
    <scope>IDENTIFICATION BY MASS SPECTROMETRY [LARGE SCALE ANALYSIS]</scope>
    <source>
        <tissue>Brain</tissue>
    </source>
</reference>
<reference key="6">
    <citation type="journal article" date="2010" name="Cell">
        <title>A tissue-specific atlas of mouse protein phosphorylation and expression.</title>
        <authorList>
            <person name="Huttlin E.L."/>
            <person name="Jedrychowski M.P."/>
            <person name="Elias J.E."/>
            <person name="Goswami T."/>
            <person name="Rad R."/>
            <person name="Beausoleil S.A."/>
            <person name="Villen J."/>
            <person name="Haas W."/>
            <person name="Sowa M.E."/>
            <person name="Gygi S.P."/>
        </authorList>
    </citation>
    <scope>IDENTIFICATION BY MASS SPECTROMETRY [LARGE SCALE ANALYSIS]</scope>
    <source>
        <tissue>Brain</tissue>
    </source>
</reference>
<comment type="sequence caution" evidence="2">
    <conflict type="erroneous initiation">
        <sequence resource="EMBL-CDS" id="BAC41474"/>
    </conflict>
</comment>
<sequence length="1742" mass="197414">MWPAGAGTKLPCPRDSALRRAAFSGNLTALPSHLVPAGRSVRVFISANPEDTGAERQALRETVYPKLREFCRENYGLEFQVIDLYWGIEEDEWDSPELQKMRMKLLEECLKTSAGPCFVGLLGEKYGNIRIPGEVEASEFEMILDAAVEAKLETKLLEDWYCRDENSVPAAYYLRPRLEVPRSNKNSTQPSASSEQERPWQEISDEIKTIFKAAVKLLHEQGKMKQSQAKRYLFSAIEDEFDFALGKQTPAFLKKCVCYIRKIANIERFVKIPEMGKYMDITGTDPRIVRDPEAQEKLIKLRDEFIPTIVASSNLRVYTSVTHCDMKLGYSQEIENHYIEGLGKQFYEDMIDIIQATVQQNFDTETDTLYDEILQHSSLCKTYASFYEYKCESLNILHKYILPSKTGHINPLVVYGGPCTGKTLLLAEVAKKAYGWLHEDTGPDSDPVVIVRFLGTTDMSIDLRTLLLSVCEQLAVNYRCLVQSFPKKIHDLRDLFINLLNESSLQRPLVIILDALEQLSEADEARKLWWLPAHLPRFVRIILSTLPNKHGILQKLRCLIHEEDNYIELIPRDRKMCSQVLKHQLLRVKRKVTSGQQIYVNNAFSKCTLPMFVNLTFREVRHWRSHKDVDESSLCVTVHESIEQLFWSLEKKCGQKLVSRALGYITMAKMGLSEMELEDVLALDNSVMNELNENTRPSNPLRVPYLYIARLKEGLNGYLIERHVKNVTLLVWANRHLQLIAQKLYLQEDSNLREMHTILADYFLGVWSGGRRKAFCLEDPYLNGCLDLENRSLLEEEKHFMEQASFDRQAPDQPWVFQCNPLEPDIFFVNHRKMSELLYHLTRCGKTDDLLYGIIMNFSWLYTMIKIGQFDKVLADIELAYNYSQEKELKFLASTLRSIRNKVIAFPGSLSAELQQRLLPVVSSLPKLRHLLLECDKDGPKYCSIVPLHSSMDVTYSPERLPLASSHLHVTEILPTCNPSTVLTALENGSISTWDVETRQLLRQITTAQSVILGMKLSSDEKYLVVATTNNTLLIYDNVNSCLLSEVEIKGTKHGSGSTYINGFTLSVNHALAWLEASKDVTVIDLLYGWPLYQFHCWYEVTCVQCSLDGVYAFCGQYLNNTTIFHLGSGEKICTVTSEFSGGFVKFLLILDTAQEMVMVDSEGSLSVWNTEDISNPQLTEDFDCRKEDSEVVSIELSEDQSAILICKALSIELLDTGMWKVAEKFRARHNERFVSAVLSKNGDCIIATMENTPAVFFWRRDTGQCLASLQESSGTIVKLVKSSHHNMLLSLSTSGVLSIWDIDIITAMSNIDKTGKPIQSLVLPARGEIIYSLDGSDCVHKWNFSSGFIEAVFKHEGIVEHCVLTSTGDLMVTSDDKSSQYVWHTSSGENLFRINGQRISQLLITHNDQFVVSLCEENASRVWRLATGHRVCNILTTLQNAFITSANTFVVGMTKSKVLAVSLWTGSITKKFCCEDGITIVNFKLIPDCPDVIVFITSAETVNLWSLTDEVICRRVQLPSNFLKNLEDFEISPNGKLGIISRGDENINVLDLHSGKLRVVHASGVIWRQRLSRDGRYLVYICFRNGEEEEENDAISSLIVMRLADGKNIGACSLYKTPTFLALSQRHLNIIVGFDDGSIGIYTVVDRVDAALKIKIATSNSRQIFNNATQTSRPKSNSYSFKVSVDCLWRESTEVFARDSPITVSDSSESNEATPSKKHNSCYDRVCAALESRSHSYTPDN</sequence>
<protein>
    <recommendedName>
        <fullName>NACHT and WD repeat domain-containing protein 2</fullName>
    </recommendedName>
    <alternativeName>
        <fullName>Leucine-rich repeat and WD repeat-containing protein KIAA1239</fullName>
    </alternativeName>
</protein>
<organism>
    <name type="scientific">Mus musculus</name>
    <name type="common">Mouse</name>
    <dbReference type="NCBI Taxonomy" id="10090"/>
    <lineage>
        <taxon>Eukaryota</taxon>
        <taxon>Metazoa</taxon>
        <taxon>Chordata</taxon>
        <taxon>Craniata</taxon>
        <taxon>Vertebrata</taxon>
        <taxon>Euteleostomi</taxon>
        <taxon>Mammalia</taxon>
        <taxon>Eutheria</taxon>
        <taxon>Euarchontoglires</taxon>
        <taxon>Glires</taxon>
        <taxon>Rodentia</taxon>
        <taxon>Myomorpha</taxon>
        <taxon>Muroidea</taxon>
        <taxon>Muridae</taxon>
        <taxon>Murinae</taxon>
        <taxon>Mus</taxon>
        <taxon>Mus</taxon>
    </lineage>
</organism>